<evidence type="ECO:0000255" key="1">
    <source>
        <dbReference type="HAMAP-Rule" id="MF_00293"/>
    </source>
</evidence>
<sequence length="43" mass="4662">METATLVAISISGLLVSFTGYALYTAFGQPSQQLRDPFEEHGD</sequence>
<reference key="1">
    <citation type="journal article" date="2005" name="DNA Res.">
        <title>Complete nucleotide sequence of the chloroplast genome from the Tasmanian blue gum, Eucalyptus globulus (Myrtaceae).</title>
        <authorList>
            <person name="Steane D.A."/>
        </authorList>
    </citation>
    <scope>NUCLEOTIDE SEQUENCE [LARGE SCALE GENOMIC DNA]</scope>
</reference>
<gene>
    <name evidence="1" type="primary">psbN</name>
</gene>
<organism>
    <name type="scientific">Eucalyptus globulus subsp. globulus</name>
    <name type="common">Tasmanian blue gum</name>
    <dbReference type="NCBI Taxonomy" id="71271"/>
    <lineage>
        <taxon>Eukaryota</taxon>
        <taxon>Viridiplantae</taxon>
        <taxon>Streptophyta</taxon>
        <taxon>Embryophyta</taxon>
        <taxon>Tracheophyta</taxon>
        <taxon>Spermatophyta</taxon>
        <taxon>Magnoliopsida</taxon>
        <taxon>eudicotyledons</taxon>
        <taxon>Gunneridae</taxon>
        <taxon>Pentapetalae</taxon>
        <taxon>rosids</taxon>
        <taxon>malvids</taxon>
        <taxon>Myrtales</taxon>
        <taxon>Myrtaceae</taxon>
        <taxon>Myrtoideae</taxon>
        <taxon>Eucalypteae</taxon>
        <taxon>Eucalyptus</taxon>
    </lineage>
</organism>
<dbReference type="EMBL" id="AY780259">
    <property type="protein sequence ID" value="AAX21055.1"/>
    <property type="molecule type" value="Genomic_DNA"/>
</dbReference>
<dbReference type="RefSeq" id="YP_636327.1">
    <property type="nucleotide sequence ID" value="NC_008115.1"/>
</dbReference>
<dbReference type="SMR" id="Q49KX0"/>
<dbReference type="GeneID" id="4108411"/>
<dbReference type="GO" id="GO:0009535">
    <property type="term" value="C:chloroplast thylakoid membrane"/>
    <property type="evidence" value="ECO:0007669"/>
    <property type="project" value="UniProtKB-SubCell"/>
</dbReference>
<dbReference type="GO" id="GO:0015979">
    <property type="term" value="P:photosynthesis"/>
    <property type="evidence" value="ECO:0007669"/>
    <property type="project" value="InterPro"/>
</dbReference>
<dbReference type="HAMAP" id="MF_00293">
    <property type="entry name" value="PSII_PsbN"/>
    <property type="match status" value="1"/>
</dbReference>
<dbReference type="InterPro" id="IPR003398">
    <property type="entry name" value="PSII_PsbN"/>
</dbReference>
<dbReference type="PANTHER" id="PTHR35326">
    <property type="entry name" value="PROTEIN PSBN"/>
    <property type="match status" value="1"/>
</dbReference>
<dbReference type="PANTHER" id="PTHR35326:SF3">
    <property type="entry name" value="PROTEIN PSBN"/>
    <property type="match status" value="1"/>
</dbReference>
<dbReference type="Pfam" id="PF02468">
    <property type="entry name" value="PsbN"/>
    <property type="match status" value="1"/>
</dbReference>
<feature type="chain" id="PRO_0000232771" description="Protein PsbN">
    <location>
        <begin position="1"/>
        <end position="43"/>
    </location>
</feature>
<feature type="transmembrane region" description="Helical" evidence="1">
    <location>
        <begin position="5"/>
        <end position="27"/>
    </location>
</feature>
<comment type="function">
    <text evidence="1">May play a role in photosystem I and II biogenesis.</text>
</comment>
<comment type="subcellular location">
    <subcellularLocation>
        <location evidence="1">Plastid</location>
        <location evidence="1">Chloroplast thylakoid membrane</location>
        <topology evidence="1">Single-pass membrane protein</topology>
    </subcellularLocation>
</comment>
<comment type="similarity">
    <text evidence="1">Belongs to the PsbN family.</text>
</comment>
<comment type="caution">
    <text evidence="1">Originally thought to be a component of PSII; based on experiments in Synechocystis, N.tabacum and barley, and its absence from PSII in T.elongatus and T.vulcanus, this is probably not true.</text>
</comment>
<name>PSBN_EUCGG</name>
<proteinExistence type="inferred from homology"/>
<protein>
    <recommendedName>
        <fullName evidence="1">Protein PsbN</fullName>
    </recommendedName>
</protein>
<keyword id="KW-0150">Chloroplast</keyword>
<keyword id="KW-0472">Membrane</keyword>
<keyword id="KW-0934">Plastid</keyword>
<keyword id="KW-0793">Thylakoid</keyword>
<keyword id="KW-0812">Transmembrane</keyword>
<keyword id="KW-1133">Transmembrane helix</keyword>
<accession>Q49KX0</accession>
<geneLocation type="chloroplast"/>